<name>THRC_PSEAE</name>
<comment type="function">
    <text evidence="1">Catalyzes the gamma-elimination of phosphate from L-phosphohomoserine and the beta-addition of water to produce L-threonine.</text>
</comment>
<comment type="catalytic activity">
    <reaction>
        <text>O-phospho-L-homoserine + H2O = L-threonine + phosphate</text>
        <dbReference type="Rhea" id="RHEA:10840"/>
        <dbReference type="ChEBI" id="CHEBI:15377"/>
        <dbReference type="ChEBI" id="CHEBI:43474"/>
        <dbReference type="ChEBI" id="CHEBI:57590"/>
        <dbReference type="ChEBI" id="CHEBI:57926"/>
        <dbReference type="EC" id="4.2.3.1"/>
    </reaction>
</comment>
<comment type="cofactor">
    <cofactor evidence="1">
        <name>pyridoxal 5'-phosphate</name>
        <dbReference type="ChEBI" id="CHEBI:597326"/>
    </cofactor>
</comment>
<comment type="pathway">
    <text>Amino-acid biosynthesis; L-threonine biosynthesis; L-threonine from L-aspartate: step 5/5.</text>
</comment>
<comment type="similarity">
    <text evidence="2">Belongs to the threonine synthase family.</text>
</comment>
<comment type="sequence caution" evidence="2">
    <conflict type="erroneous initiation">
        <sequence resource="EMBL-CDS" id="CAA46168"/>
    </conflict>
</comment>
<organism>
    <name type="scientific">Pseudomonas aeruginosa (strain ATCC 15692 / DSM 22644 / CIP 104116 / JCM 14847 / LMG 12228 / 1C / PRS 101 / PAO1)</name>
    <dbReference type="NCBI Taxonomy" id="208964"/>
    <lineage>
        <taxon>Bacteria</taxon>
        <taxon>Pseudomonadati</taxon>
        <taxon>Pseudomonadota</taxon>
        <taxon>Gammaproteobacteria</taxon>
        <taxon>Pseudomonadales</taxon>
        <taxon>Pseudomonadaceae</taxon>
        <taxon>Pseudomonas</taxon>
    </lineage>
</organism>
<reference key="1">
    <citation type="journal article" date="1992" name="Mol. Microbiol.">
        <title>Isolation, organization and expression of the Pseudomonas aeruginosa threonine genes.</title>
        <authorList>
            <person name="Clepet C."/>
            <person name="Borne F."/>
            <person name="Krishnapillai V."/>
            <person name="Baird C."/>
            <person name="Patte J.-C."/>
            <person name="Cami B."/>
        </authorList>
    </citation>
    <scope>NUCLEOTIDE SEQUENCE [GENOMIC DNA]</scope>
    <source>
        <strain>ATCC 15692 / DSM 22644 / CIP 104116 / JCM 14847 / LMG 12228 / 1C / PRS 101 / PAO1</strain>
    </source>
</reference>
<reference key="2">
    <citation type="journal article" date="2000" name="Nature">
        <title>Complete genome sequence of Pseudomonas aeruginosa PAO1, an opportunistic pathogen.</title>
        <authorList>
            <person name="Stover C.K."/>
            <person name="Pham X.-Q.T."/>
            <person name="Erwin A.L."/>
            <person name="Mizoguchi S.D."/>
            <person name="Warrener P."/>
            <person name="Hickey M.J."/>
            <person name="Brinkman F.S.L."/>
            <person name="Hufnagle W.O."/>
            <person name="Kowalik D.J."/>
            <person name="Lagrou M."/>
            <person name="Garber R.L."/>
            <person name="Goltry L."/>
            <person name="Tolentino E."/>
            <person name="Westbrock-Wadman S."/>
            <person name="Yuan Y."/>
            <person name="Brody L.L."/>
            <person name="Coulter S.N."/>
            <person name="Folger K.R."/>
            <person name="Kas A."/>
            <person name="Larbig K."/>
            <person name="Lim R.M."/>
            <person name="Smith K.A."/>
            <person name="Spencer D.H."/>
            <person name="Wong G.K.-S."/>
            <person name="Wu Z."/>
            <person name="Paulsen I.T."/>
            <person name="Reizer J."/>
            <person name="Saier M.H. Jr."/>
            <person name="Hancock R.E.W."/>
            <person name="Lory S."/>
            <person name="Olson M.V."/>
        </authorList>
    </citation>
    <scope>NUCLEOTIDE SEQUENCE [LARGE SCALE GENOMIC DNA]</scope>
    <source>
        <strain>ATCC 15692 / DSM 22644 / CIP 104116 / JCM 14847 / LMG 12228 / 1C / PRS 101 / PAO1</strain>
    </source>
</reference>
<evidence type="ECO:0000250" key="1"/>
<evidence type="ECO:0000305" key="2"/>
<dbReference type="EC" id="4.2.3.1"/>
<dbReference type="EMBL" id="X65033">
    <property type="protein sequence ID" value="CAA46168.1"/>
    <property type="status" value="ALT_INIT"/>
    <property type="molecule type" value="Genomic_DNA"/>
</dbReference>
<dbReference type="EMBL" id="AE004091">
    <property type="protein sequence ID" value="AAG07122.1"/>
    <property type="molecule type" value="Genomic_DNA"/>
</dbReference>
<dbReference type="PIR" id="G83179">
    <property type="entry name" value="G83179"/>
</dbReference>
<dbReference type="PIR" id="S27980">
    <property type="entry name" value="SYPSRA"/>
</dbReference>
<dbReference type="RefSeq" id="NP_252424.1">
    <property type="nucleotide sequence ID" value="NC_002516.2"/>
</dbReference>
<dbReference type="RefSeq" id="WP_003113831.1">
    <property type="nucleotide sequence ID" value="NZ_QZGE01000001.1"/>
</dbReference>
<dbReference type="SMR" id="P29363"/>
<dbReference type="FunCoup" id="P29363">
    <property type="interactions" value="498"/>
</dbReference>
<dbReference type="STRING" id="208964.PA3735"/>
<dbReference type="PaxDb" id="208964-PA3735"/>
<dbReference type="GeneID" id="880336"/>
<dbReference type="KEGG" id="pae:PA3735"/>
<dbReference type="PATRIC" id="fig|208964.12.peg.3907"/>
<dbReference type="PseudoCAP" id="PA3735"/>
<dbReference type="HOGENOM" id="CLU_015170_1_0_6"/>
<dbReference type="InParanoid" id="P29363"/>
<dbReference type="OrthoDB" id="9763107at2"/>
<dbReference type="PhylomeDB" id="P29363"/>
<dbReference type="BioCyc" id="PAER208964:G1FZ6-3806-MONOMER"/>
<dbReference type="UniPathway" id="UPA00050">
    <property type="reaction ID" value="UER00065"/>
</dbReference>
<dbReference type="Proteomes" id="UP000002438">
    <property type="component" value="Chromosome"/>
</dbReference>
<dbReference type="GO" id="GO:0030170">
    <property type="term" value="F:pyridoxal phosphate binding"/>
    <property type="evidence" value="ECO:0007669"/>
    <property type="project" value="InterPro"/>
</dbReference>
<dbReference type="GO" id="GO:0004795">
    <property type="term" value="F:threonine synthase activity"/>
    <property type="evidence" value="ECO:0007669"/>
    <property type="project" value="UniProtKB-EC"/>
</dbReference>
<dbReference type="GO" id="GO:0009088">
    <property type="term" value="P:threonine biosynthetic process"/>
    <property type="evidence" value="ECO:0007669"/>
    <property type="project" value="UniProtKB-UniPathway"/>
</dbReference>
<dbReference type="CDD" id="cd01560">
    <property type="entry name" value="Thr-synth_2"/>
    <property type="match status" value="1"/>
</dbReference>
<dbReference type="FunFam" id="3.40.50.1100:FF:000052">
    <property type="entry name" value="Threonine synthase"/>
    <property type="match status" value="1"/>
</dbReference>
<dbReference type="FunFam" id="3.90.1380.10:FF:000002">
    <property type="entry name" value="Threonine synthase"/>
    <property type="match status" value="1"/>
</dbReference>
<dbReference type="Gene3D" id="3.40.50.1100">
    <property type="match status" value="2"/>
</dbReference>
<dbReference type="Gene3D" id="3.90.1380.10">
    <property type="entry name" value="Threonine synthase, N-terminal domain"/>
    <property type="match status" value="1"/>
</dbReference>
<dbReference type="InterPro" id="IPR000634">
    <property type="entry name" value="Ser/Thr_deHydtase_PyrdxlP-BS"/>
</dbReference>
<dbReference type="InterPro" id="IPR029144">
    <property type="entry name" value="Thr_synth_N"/>
</dbReference>
<dbReference type="InterPro" id="IPR037158">
    <property type="entry name" value="Thr_synth_N_sf"/>
</dbReference>
<dbReference type="InterPro" id="IPR004450">
    <property type="entry name" value="Thr_synthase-like"/>
</dbReference>
<dbReference type="InterPro" id="IPR051166">
    <property type="entry name" value="Threonine_Synthase"/>
</dbReference>
<dbReference type="InterPro" id="IPR001926">
    <property type="entry name" value="TrpB-like_PALP"/>
</dbReference>
<dbReference type="InterPro" id="IPR036052">
    <property type="entry name" value="TrpB-like_PALP_sf"/>
</dbReference>
<dbReference type="NCBIfam" id="TIGR00260">
    <property type="entry name" value="thrC"/>
    <property type="match status" value="1"/>
</dbReference>
<dbReference type="PANTHER" id="PTHR42690">
    <property type="entry name" value="THREONINE SYNTHASE FAMILY MEMBER"/>
    <property type="match status" value="1"/>
</dbReference>
<dbReference type="PANTHER" id="PTHR42690:SF1">
    <property type="entry name" value="THREONINE SYNTHASE-LIKE 2"/>
    <property type="match status" value="1"/>
</dbReference>
<dbReference type="Pfam" id="PF00291">
    <property type="entry name" value="PALP"/>
    <property type="match status" value="1"/>
</dbReference>
<dbReference type="Pfam" id="PF24857">
    <property type="entry name" value="THR4_C"/>
    <property type="match status" value="1"/>
</dbReference>
<dbReference type="Pfam" id="PF14821">
    <property type="entry name" value="Thr_synth_N"/>
    <property type="match status" value="1"/>
</dbReference>
<dbReference type="SUPFAM" id="SSF53686">
    <property type="entry name" value="Tryptophan synthase beta subunit-like PLP-dependent enzymes"/>
    <property type="match status" value="1"/>
</dbReference>
<dbReference type="PROSITE" id="PS00165">
    <property type="entry name" value="DEHYDRATASE_SER_THR"/>
    <property type="match status" value="1"/>
</dbReference>
<protein>
    <recommendedName>
        <fullName>Threonine synthase</fullName>
        <shortName>TS</shortName>
        <ecNumber>4.2.3.1</ecNumber>
    </recommendedName>
</protein>
<gene>
    <name type="primary">thrC</name>
    <name type="ordered locus">PA3735</name>
</gene>
<accession>P29363</accession>
<accession>Q9HXQ7</accession>
<keyword id="KW-0028">Amino-acid biosynthesis</keyword>
<keyword id="KW-0456">Lyase</keyword>
<keyword id="KW-0663">Pyridoxal phosphate</keyword>
<keyword id="KW-1185">Reference proteome</keyword>
<keyword id="KW-0791">Threonine biosynthesis</keyword>
<sequence length="469" mass="51795">MRYISTRGQAPALNFEDVLLAGLASDGGLYVPENLPRFTLEEIASWVGLPYHELAFRVMRPFVAGSIADADFKKILEETYGVFAHDAVAPLRQLNGNEWVLELFHGPTLAFKDFALQLLGRLLDHVLAKRGERVVIMGATSGDTGSAAIEGCRRCDNVDIFIMHPHNRVSEVQRRQMTTILGDNIHNIAIEGNFDDCQEMVKASFADQGFLKGTRLVAVNSINWARIMAQIVYYFHAALQLGAPHRSVAFSVPTGNFGDIFAGYLARNMGLPVSQLIVATNRNDILHRFMSGNRYDKDTLHPSLSPSMDIMVSSNFERLLFDLHGRNGKAVAELLDAFKASGKLSVEDQRWTEARKLFDSLAVSDEQTCETIAEVYRSSGELLDPHTAIGVRAARECRRSLSVPMVTLGTAHPVKFPEAVEKAGIGQAPALPAHLADLFEREERCTVLPNELAKVQAFVSQHGNRGKPL</sequence>
<proteinExistence type="inferred from homology"/>
<feature type="chain" id="PRO_0000185639" description="Threonine synthase">
    <location>
        <begin position="1"/>
        <end position="469"/>
    </location>
</feature>
<feature type="modified residue" description="N6-(pyridoxal phosphate)lysine" evidence="1">
    <location>
        <position position="112"/>
    </location>
</feature>
<feature type="sequence conflict" description="In Ref. 1." evidence="2" ref="1">
    <original>VAPLRQLNGNEWVL</original>
    <variation>SGAAAPVERRTNGCV</variation>
    <location>
        <begin position="88"/>
        <end position="101"/>
    </location>
</feature>
<feature type="sequence conflict" description="In Ref. 1; CAA46168." evidence="2" ref="1">
    <original>GCRRC</original>
    <variation>AAAVA</variation>
    <location>
        <begin position="151"/>
        <end position="155"/>
    </location>
</feature>
<feature type="sequence conflict" description="In Ref. 1; CAA46168." evidence="2" ref="1">
    <original>MH</original>
    <variation>ID</variation>
    <location>
        <begin position="163"/>
        <end position="164"/>
    </location>
</feature>
<feature type="sequence conflict" description="In Ref. 1; CAA46168." evidence="2" ref="1">
    <original>Q</original>
    <variation>E</variation>
    <location>
        <position position="173"/>
    </location>
</feature>
<feature type="sequence conflict" description="In Ref. 1; CAA46168." evidence="2" ref="1">
    <original>L</original>
    <variation>H</variation>
    <location>
        <position position="181"/>
    </location>
</feature>
<feature type="sequence conflict" description="In Ref. 1; CAA46168." evidence="2" ref="1">
    <original>T</original>
    <variation>R</variation>
    <location>
        <position position="280"/>
    </location>
</feature>
<feature type="sequence conflict" description="In Ref. 1; CAA46168." evidence="2" ref="1">
    <original>RYDKDTLHPSL</original>
    <variation>ASTRHTLTPSV</variation>
    <location>
        <begin position="294"/>
        <end position="304"/>
    </location>
</feature>
<feature type="sequence conflict" description="In Ref. 1; CAA46168." evidence="2" ref="1">
    <original>R</original>
    <variation>P</variation>
    <location>
        <position position="465"/>
    </location>
</feature>